<feature type="chain" id="PRO_0000384847" description="Uncharacterized protein ORF103">
    <location>
        <begin position="1"/>
        <end position="103"/>
    </location>
</feature>
<feature type="transmembrane region" description="Helical" evidence="1">
    <location>
        <begin position="35"/>
        <end position="57"/>
    </location>
</feature>
<feature type="splice variant" id="VSP_038085" description="In isoform ORF71." evidence="2">
    <location>
        <begin position="1"/>
        <end position="32"/>
    </location>
</feature>
<organism>
    <name type="scientific">Acidianus bottle-shaped virus (isolate Italy/Pozzuoli)</name>
    <name type="common">ABV</name>
    <dbReference type="NCBI Taxonomy" id="654911"/>
    <lineage>
        <taxon>Viruses</taxon>
        <taxon>Viruses incertae sedis</taxon>
        <taxon>Ampullaviridae</taxon>
        <taxon>Bottigliavirus</taxon>
        <taxon>Bottigliavirus ABV</taxon>
    </lineage>
</organism>
<accession>A4ZUB5</accession>
<accession>A4ZUB6</accession>
<proteinExistence type="predicted"/>
<protein>
    <recommendedName>
        <fullName>Uncharacterized protein ORF103</fullName>
    </recommendedName>
</protein>
<evidence type="ECO:0000255" key="1"/>
<evidence type="ECO:0000305" key="2"/>
<sequence length="103" mass="12036">MKYSSTLSYTLIVHTTSSTNCKEYLNYCKVTSMDPFVSMFQTFLEVLTATVLAFTAYEAYERRMERQEKGEAMRDLIDLHRMRTIGDVIEKQEETKEKQAQGK</sequence>
<gene>
    <name type="ORF">ORF103</name>
</gene>
<comment type="subcellular location">
    <subcellularLocation>
        <location evidence="2">Host membrane</location>
        <topology evidence="2">Single-pass membrane protein</topology>
    </subcellularLocation>
</comment>
<comment type="alternative products">
    <event type="alternative initiation"/>
    <isoform>
        <id>A4ZUB5-1</id>
        <name>ORF103</name>
        <sequence type="displayed"/>
    </isoform>
    <isoform>
        <id>A4ZUB5-2</id>
        <name>ORF71</name>
        <sequence type="described" ref="VSP_038085"/>
    </isoform>
</comment>
<comment type="miscellaneous">
    <molecule>Isoform ORF71</molecule>
    <text evidence="2">Produced by alternative initiation of the ORF103 mRNA.</text>
</comment>
<comment type="sequence caution" evidence="2">
    <conflict type="erroneous initiation">
        <sequence resource="EMBL-CDS" id="ABP73420"/>
    </conflict>
</comment>
<organismHost>
    <name type="scientific">Acidianus convivator</name>
    <dbReference type="NCBI Taxonomy" id="269667"/>
</organismHost>
<reference key="1">
    <citation type="journal article" date="2007" name="Virology">
        <title>Genome of the Acidianus bottle-shaped virus and insights into the replication and packaging mechanisms.</title>
        <authorList>
            <person name="Peng X."/>
            <person name="Basta T."/>
            <person name="Haring M."/>
            <person name="Garrett R.A."/>
            <person name="Prangishvili D."/>
        </authorList>
    </citation>
    <scope>NUCLEOTIDE SEQUENCE [GENOMIC DNA]</scope>
</reference>
<dbReference type="EMBL" id="EF432053">
    <property type="protein sequence ID" value="ABP73419.1"/>
    <property type="molecule type" value="Genomic_DNA"/>
</dbReference>
<dbReference type="EMBL" id="EF432053">
    <property type="protein sequence ID" value="ABP73420.1"/>
    <property type="status" value="ALT_INIT"/>
    <property type="molecule type" value="Genomic_DNA"/>
</dbReference>
<dbReference type="RefSeq" id="YP_001210333.1">
    <property type="nucleotide sequence ID" value="NC_009452.1"/>
</dbReference>
<dbReference type="GeneID" id="5129811"/>
<dbReference type="KEGG" id="vg:5129811"/>
<dbReference type="KEGG" id="vg:5129835"/>
<dbReference type="Proteomes" id="UP000000513">
    <property type="component" value="Segment"/>
</dbReference>
<dbReference type="GO" id="GO:0033644">
    <property type="term" value="C:host cell membrane"/>
    <property type="evidence" value="ECO:0007669"/>
    <property type="project" value="UniProtKB-SubCell"/>
</dbReference>
<dbReference type="GO" id="GO:0016020">
    <property type="term" value="C:membrane"/>
    <property type="evidence" value="ECO:0007669"/>
    <property type="project" value="UniProtKB-KW"/>
</dbReference>
<keyword id="KW-0024">Alternative initiation</keyword>
<keyword id="KW-1043">Host membrane</keyword>
<keyword id="KW-0472">Membrane</keyword>
<keyword id="KW-1185">Reference proteome</keyword>
<keyword id="KW-0812">Transmembrane</keyword>
<keyword id="KW-1133">Transmembrane helix</keyword>
<name>Y103_ABVP</name>